<gene>
    <name type="primary">vps29</name>
    <name type="ORF">DDB_G0288787</name>
</gene>
<feature type="chain" id="PRO_0000328097" description="Vacuolar protein sorting-associated protein 29">
    <location>
        <begin position="1"/>
        <end position="183"/>
    </location>
</feature>
<feature type="binding site" evidence="1">
    <location>
        <position position="8"/>
    </location>
    <ligand>
        <name>Zn(2+)</name>
        <dbReference type="ChEBI" id="CHEBI:29105"/>
        <label>1</label>
    </ligand>
</feature>
<feature type="binding site" evidence="1">
    <location>
        <position position="10"/>
    </location>
    <ligand>
        <name>Zn(2+)</name>
        <dbReference type="ChEBI" id="CHEBI:29105"/>
        <label>1</label>
    </ligand>
</feature>
<feature type="binding site" evidence="1">
    <location>
        <position position="39"/>
    </location>
    <ligand>
        <name>Zn(2+)</name>
        <dbReference type="ChEBI" id="CHEBI:29105"/>
        <label>1</label>
    </ligand>
</feature>
<feature type="binding site" evidence="1">
    <location>
        <position position="39"/>
    </location>
    <ligand>
        <name>Zn(2+)</name>
        <dbReference type="ChEBI" id="CHEBI:29105"/>
        <label>2</label>
    </ligand>
</feature>
<feature type="binding site" evidence="1">
    <location>
        <position position="62"/>
    </location>
    <ligand>
        <name>Zn(2+)</name>
        <dbReference type="ChEBI" id="CHEBI:29105"/>
        <label>2</label>
    </ligand>
</feature>
<feature type="binding site" evidence="1">
    <location>
        <position position="86"/>
    </location>
    <ligand>
        <name>Zn(2+)</name>
        <dbReference type="ChEBI" id="CHEBI:29105"/>
        <label>2</label>
    </ligand>
</feature>
<feature type="binding site" evidence="1">
    <location>
        <position position="115"/>
    </location>
    <ligand>
        <name>Zn(2+)</name>
        <dbReference type="ChEBI" id="CHEBI:29105"/>
        <label>2</label>
    </ligand>
</feature>
<feature type="binding site" evidence="1">
    <location>
        <position position="117"/>
    </location>
    <ligand>
        <name>Zn(2+)</name>
        <dbReference type="ChEBI" id="CHEBI:29105"/>
        <label>1</label>
    </ligand>
</feature>
<keyword id="KW-0967">Endosome</keyword>
<keyword id="KW-0378">Hydrolase</keyword>
<keyword id="KW-0472">Membrane</keyword>
<keyword id="KW-0479">Metal-binding</keyword>
<keyword id="KW-0653">Protein transport</keyword>
<keyword id="KW-1185">Reference proteome</keyword>
<keyword id="KW-0813">Transport</keyword>
<keyword id="KW-0862">Zinc</keyword>
<sequence length="183" mass="20414">MFIIAIGDVHVPHRSYGIPPEFKKLLVPEKIQHILCTGNLVSKEIHDYFKVLTSDVHIVRGDLDENTSYPDTKIVSIGQFKFGLCHGHQIVPWGDRASLAALQRQLDVDVLISGHTHVLEVFESNGKLFVNPGSATGAFSNISNDVIPSFVLMDVQSNNITVYIYKLIDGQVKVEKIDHVKQQ</sequence>
<reference key="1">
    <citation type="journal article" date="2005" name="Nature">
        <title>The genome of the social amoeba Dictyostelium discoideum.</title>
        <authorList>
            <person name="Eichinger L."/>
            <person name="Pachebat J.A."/>
            <person name="Gloeckner G."/>
            <person name="Rajandream M.A."/>
            <person name="Sucgang R."/>
            <person name="Berriman M."/>
            <person name="Song J."/>
            <person name="Olsen R."/>
            <person name="Szafranski K."/>
            <person name="Xu Q."/>
            <person name="Tunggal B."/>
            <person name="Kummerfeld S."/>
            <person name="Madera M."/>
            <person name="Konfortov B.A."/>
            <person name="Rivero F."/>
            <person name="Bankier A.T."/>
            <person name="Lehmann R."/>
            <person name="Hamlin N."/>
            <person name="Davies R."/>
            <person name="Gaudet P."/>
            <person name="Fey P."/>
            <person name="Pilcher K."/>
            <person name="Chen G."/>
            <person name="Saunders D."/>
            <person name="Sodergren E.J."/>
            <person name="Davis P."/>
            <person name="Kerhornou A."/>
            <person name="Nie X."/>
            <person name="Hall N."/>
            <person name="Anjard C."/>
            <person name="Hemphill L."/>
            <person name="Bason N."/>
            <person name="Farbrother P."/>
            <person name="Desany B."/>
            <person name="Just E."/>
            <person name="Morio T."/>
            <person name="Rost R."/>
            <person name="Churcher C.M."/>
            <person name="Cooper J."/>
            <person name="Haydock S."/>
            <person name="van Driessche N."/>
            <person name="Cronin A."/>
            <person name="Goodhead I."/>
            <person name="Muzny D.M."/>
            <person name="Mourier T."/>
            <person name="Pain A."/>
            <person name="Lu M."/>
            <person name="Harper D."/>
            <person name="Lindsay R."/>
            <person name="Hauser H."/>
            <person name="James K.D."/>
            <person name="Quiles M."/>
            <person name="Madan Babu M."/>
            <person name="Saito T."/>
            <person name="Buchrieser C."/>
            <person name="Wardroper A."/>
            <person name="Felder M."/>
            <person name="Thangavelu M."/>
            <person name="Johnson D."/>
            <person name="Knights A."/>
            <person name="Loulseged H."/>
            <person name="Mungall K.L."/>
            <person name="Oliver K."/>
            <person name="Price C."/>
            <person name="Quail M.A."/>
            <person name="Urushihara H."/>
            <person name="Hernandez J."/>
            <person name="Rabbinowitsch E."/>
            <person name="Steffen D."/>
            <person name="Sanders M."/>
            <person name="Ma J."/>
            <person name="Kohara Y."/>
            <person name="Sharp S."/>
            <person name="Simmonds M.N."/>
            <person name="Spiegler S."/>
            <person name="Tivey A."/>
            <person name="Sugano S."/>
            <person name="White B."/>
            <person name="Walker D."/>
            <person name="Woodward J.R."/>
            <person name="Winckler T."/>
            <person name="Tanaka Y."/>
            <person name="Shaulsky G."/>
            <person name="Schleicher M."/>
            <person name="Weinstock G.M."/>
            <person name="Rosenthal A."/>
            <person name="Cox E.C."/>
            <person name="Chisholm R.L."/>
            <person name="Gibbs R.A."/>
            <person name="Loomis W.F."/>
            <person name="Platzer M."/>
            <person name="Kay R.R."/>
            <person name="Williams J.G."/>
            <person name="Dear P.H."/>
            <person name="Noegel A.A."/>
            <person name="Barrell B.G."/>
            <person name="Kuspa A."/>
        </authorList>
    </citation>
    <scope>NUCLEOTIDE SEQUENCE [LARGE SCALE GENOMIC DNA]</scope>
    <source>
        <strain>AX4</strain>
    </source>
</reference>
<dbReference type="EC" id="3.1.3.3"/>
<dbReference type="EMBL" id="AAFI02000125">
    <property type="protein sequence ID" value="EAL63015.1"/>
    <property type="molecule type" value="Genomic_DNA"/>
</dbReference>
<dbReference type="RefSeq" id="XP_636520.1">
    <property type="nucleotide sequence ID" value="XM_631428.1"/>
</dbReference>
<dbReference type="SMR" id="Q54IF7"/>
<dbReference type="FunCoup" id="Q54IF7">
    <property type="interactions" value="965"/>
</dbReference>
<dbReference type="STRING" id="44689.Q54IF7"/>
<dbReference type="PaxDb" id="44689-DDB0234192"/>
<dbReference type="EnsemblProtists" id="EAL63015">
    <property type="protein sequence ID" value="EAL63015"/>
    <property type="gene ID" value="DDB_G0288787"/>
</dbReference>
<dbReference type="GeneID" id="8626805"/>
<dbReference type="KEGG" id="ddi:DDB_G0288787"/>
<dbReference type="dictyBase" id="DDB_G0288787">
    <property type="gene designation" value="vps29"/>
</dbReference>
<dbReference type="VEuPathDB" id="AmoebaDB:DDB_G0288787"/>
<dbReference type="eggNOG" id="KOG3325">
    <property type="taxonomic scope" value="Eukaryota"/>
</dbReference>
<dbReference type="HOGENOM" id="CLU_063749_0_1_1"/>
<dbReference type="InParanoid" id="Q54IF7"/>
<dbReference type="OMA" id="VRGNMDY"/>
<dbReference type="PhylomeDB" id="Q54IF7"/>
<dbReference type="Reactome" id="R-DDI-3238698">
    <property type="pathway name" value="WNT ligand biogenesis and trafficking"/>
</dbReference>
<dbReference type="PRO" id="PR:Q54IF7"/>
<dbReference type="Proteomes" id="UP000002195">
    <property type="component" value="Chromosome 5"/>
</dbReference>
<dbReference type="GO" id="GO:0005829">
    <property type="term" value="C:cytosol"/>
    <property type="evidence" value="ECO:0007669"/>
    <property type="project" value="GOC"/>
</dbReference>
<dbReference type="GO" id="GO:0032009">
    <property type="term" value="C:early phagosome"/>
    <property type="evidence" value="ECO:0000314"/>
    <property type="project" value="dictyBase"/>
</dbReference>
<dbReference type="GO" id="GO:0005768">
    <property type="term" value="C:endosome"/>
    <property type="evidence" value="ECO:0000318"/>
    <property type="project" value="GO_Central"/>
</dbReference>
<dbReference type="GO" id="GO:0010008">
    <property type="term" value="C:endosome membrane"/>
    <property type="evidence" value="ECO:0007669"/>
    <property type="project" value="UniProtKB-SubCell"/>
</dbReference>
<dbReference type="GO" id="GO:0045335">
    <property type="term" value="C:phagocytic vesicle"/>
    <property type="evidence" value="ECO:0007005"/>
    <property type="project" value="dictyBase"/>
</dbReference>
<dbReference type="GO" id="GO:0032010">
    <property type="term" value="C:phagolysosome"/>
    <property type="evidence" value="ECO:0000314"/>
    <property type="project" value="dictyBase"/>
</dbReference>
<dbReference type="GO" id="GO:0030904">
    <property type="term" value="C:retromer complex"/>
    <property type="evidence" value="ECO:0000250"/>
    <property type="project" value="dictyBase"/>
</dbReference>
<dbReference type="GO" id="GO:0036424">
    <property type="term" value="F:L-phosphoserine phosphatase activity"/>
    <property type="evidence" value="ECO:0007669"/>
    <property type="project" value="RHEA"/>
</dbReference>
<dbReference type="GO" id="GO:0046872">
    <property type="term" value="F:metal ion binding"/>
    <property type="evidence" value="ECO:0007669"/>
    <property type="project" value="UniProtKB-KW"/>
</dbReference>
<dbReference type="GO" id="GO:0006886">
    <property type="term" value="P:intracellular protein transport"/>
    <property type="evidence" value="ECO:0000318"/>
    <property type="project" value="GO_Central"/>
</dbReference>
<dbReference type="GO" id="GO:0042147">
    <property type="term" value="P:retrograde transport, endosome to Golgi"/>
    <property type="evidence" value="ECO:0000250"/>
    <property type="project" value="dictyBase"/>
</dbReference>
<dbReference type="CDD" id="cd07394">
    <property type="entry name" value="MPP_Vps29"/>
    <property type="match status" value="1"/>
</dbReference>
<dbReference type="FunFam" id="3.60.21.10:FF:000015">
    <property type="entry name" value="Vacuolar protein sorting-associated protein 29"/>
    <property type="match status" value="1"/>
</dbReference>
<dbReference type="Gene3D" id="3.60.21.10">
    <property type="match status" value="1"/>
</dbReference>
<dbReference type="InterPro" id="IPR024654">
    <property type="entry name" value="Calcineurin-like_PHP_lpxH"/>
</dbReference>
<dbReference type="InterPro" id="IPR029052">
    <property type="entry name" value="Metallo-depent_PP-like"/>
</dbReference>
<dbReference type="InterPro" id="IPR020935">
    <property type="entry name" value="PdiEstase_YfcE_CS"/>
</dbReference>
<dbReference type="InterPro" id="IPR000979">
    <property type="entry name" value="Phosphodiesterase_MJ0936/Vps29"/>
</dbReference>
<dbReference type="InterPro" id="IPR028661">
    <property type="entry name" value="Vps29"/>
</dbReference>
<dbReference type="NCBIfam" id="TIGR00040">
    <property type="entry name" value="yfcE"/>
    <property type="match status" value="1"/>
</dbReference>
<dbReference type="PANTHER" id="PTHR11124">
    <property type="entry name" value="VACUOLAR SORTING PROTEIN VPS29"/>
    <property type="match status" value="1"/>
</dbReference>
<dbReference type="Pfam" id="PF12850">
    <property type="entry name" value="Metallophos_2"/>
    <property type="match status" value="1"/>
</dbReference>
<dbReference type="SUPFAM" id="SSF56300">
    <property type="entry name" value="Metallo-dependent phosphatases"/>
    <property type="match status" value="1"/>
</dbReference>
<dbReference type="PROSITE" id="PS01269">
    <property type="entry name" value="UPF0025"/>
    <property type="match status" value="1"/>
</dbReference>
<protein>
    <recommendedName>
        <fullName>Vacuolar protein sorting-associated protein 29</fullName>
        <ecNumber>3.1.3.3</ecNumber>
    </recommendedName>
</protein>
<proteinExistence type="inferred from homology"/>
<organism>
    <name type="scientific">Dictyostelium discoideum</name>
    <name type="common">Social amoeba</name>
    <dbReference type="NCBI Taxonomy" id="44689"/>
    <lineage>
        <taxon>Eukaryota</taxon>
        <taxon>Amoebozoa</taxon>
        <taxon>Evosea</taxon>
        <taxon>Eumycetozoa</taxon>
        <taxon>Dictyostelia</taxon>
        <taxon>Dictyosteliales</taxon>
        <taxon>Dictyosteliaceae</taxon>
        <taxon>Dictyostelium</taxon>
    </lineage>
</organism>
<name>VPS29_DICDI</name>
<accession>Q54IF7</accession>
<evidence type="ECO:0000250" key="1"/>
<evidence type="ECO:0000305" key="2"/>
<comment type="function">
    <text evidence="1">Plays a role in vesicular protein sorting. Component of the membrane-associated retromer complex which is essential in endosome-to-Golgi retrograde transport. The vps29-vps26-vps35 subcomplex may be involved in cargo selection.</text>
</comment>
<comment type="catalytic activity">
    <reaction>
        <text>O-phospho-L-serine + H2O = L-serine + phosphate</text>
        <dbReference type="Rhea" id="RHEA:21208"/>
        <dbReference type="ChEBI" id="CHEBI:15377"/>
        <dbReference type="ChEBI" id="CHEBI:33384"/>
        <dbReference type="ChEBI" id="CHEBI:43474"/>
        <dbReference type="ChEBI" id="CHEBI:57524"/>
        <dbReference type="EC" id="3.1.3.3"/>
    </reaction>
</comment>
<comment type="catalytic activity">
    <reaction>
        <text>O-phospho-D-serine + H2O = D-serine + phosphate</text>
        <dbReference type="Rhea" id="RHEA:24873"/>
        <dbReference type="ChEBI" id="CHEBI:15377"/>
        <dbReference type="ChEBI" id="CHEBI:35247"/>
        <dbReference type="ChEBI" id="CHEBI:43474"/>
        <dbReference type="ChEBI" id="CHEBI:58680"/>
        <dbReference type="EC" id="3.1.3.3"/>
    </reaction>
</comment>
<comment type="cofactor">
    <cofactor evidence="1">
        <name>Zn(2+)</name>
        <dbReference type="ChEBI" id="CHEBI:29105"/>
    </cofactor>
    <text evidence="1">Binds 2 Zn(2+) ions per subunit.</text>
</comment>
<comment type="subunit">
    <text evidence="1">Component of a retromer subcomplex consisting of vps29, vps26 and vps35.</text>
</comment>
<comment type="subcellular location">
    <subcellularLocation>
        <location evidence="1">Membrane</location>
        <topology evidence="1">Peripheral membrane protein</topology>
        <orientation evidence="1">Cytoplasmic side</orientation>
    </subcellularLocation>
    <subcellularLocation>
        <location evidence="2">Endosome membrane</location>
        <topology evidence="2">Peripheral membrane protein</topology>
        <orientation evidence="2">Cytoplasmic side</orientation>
    </subcellularLocation>
</comment>
<comment type="similarity">
    <text evidence="2">Belongs to the VPS29 family.</text>
</comment>